<protein>
    <recommendedName>
        <fullName evidence="1">Transcription termination factor FttA</fullName>
        <ecNumber evidence="1">3.1.-.-</ecNumber>
    </recommendedName>
    <alternativeName>
        <fullName evidence="3">KH-CPSF</fullName>
    </alternativeName>
</protein>
<proteinExistence type="evidence at protein level"/>
<feature type="chain" id="PRO_0000460390" description="Transcription termination factor FttA">
    <location>
        <begin position="1"/>
        <end position="637"/>
    </location>
</feature>
<feature type="region of interest" description="KHa" evidence="1">
    <location>
        <begin position="4"/>
        <end position="71"/>
    </location>
</feature>
<feature type="region of interest" description="KHb" evidence="1">
    <location>
        <begin position="72"/>
        <end position="139"/>
    </location>
</feature>
<feature type="region of interest" description="Metallo-beta-lactamase N-terminus" evidence="1">
    <location>
        <begin position="180"/>
        <end position="383"/>
    </location>
</feature>
<feature type="region of interest" description="Beta-Casp" evidence="1">
    <location>
        <begin position="384"/>
        <end position="578"/>
    </location>
</feature>
<feature type="region of interest" description="Metallo-beta-lactamase C-terminus" evidence="1">
    <location>
        <begin position="579"/>
        <end position="637"/>
    </location>
</feature>
<feature type="binding site" evidence="1 2 5">
    <location>
        <position position="242"/>
    </location>
    <ligand>
        <name>Zn(2+)</name>
        <dbReference type="ChEBI" id="CHEBI:29105"/>
        <label>1</label>
    </ligand>
</feature>
<feature type="binding site" evidence="1 2 5">
    <location>
        <position position="244"/>
    </location>
    <ligand>
        <name>Zn(2+)</name>
        <dbReference type="ChEBI" id="CHEBI:29105"/>
        <label>1</label>
    </ligand>
</feature>
<feature type="binding site" evidence="1 2 5">
    <location>
        <position position="246"/>
    </location>
    <ligand>
        <name>Zn(2+)</name>
        <dbReference type="ChEBI" id="CHEBI:29105"/>
        <label>2</label>
    </ligand>
</feature>
<feature type="binding site" evidence="1 2 5">
    <location>
        <position position="247"/>
    </location>
    <ligand>
        <name>Zn(2+)</name>
        <dbReference type="ChEBI" id="CHEBI:29105"/>
        <label>2</label>
    </ligand>
</feature>
<feature type="binding site" evidence="1 2 5">
    <location>
        <position position="329"/>
    </location>
    <ligand>
        <name>Zn(2+)</name>
        <dbReference type="ChEBI" id="CHEBI:29105"/>
        <label>1</label>
    </ligand>
</feature>
<feature type="binding site" evidence="1 2 5">
    <location>
        <position position="352"/>
    </location>
    <ligand>
        <name>Zn(2+)</name>
        <dbReference type="ChEBI" id="CHEBI:29105"/>
        <label>1</label>
    </ligand>
</feature>
<feature type="binding site" evidence="1 2 5">
    <location>
        <position position="352"/>
    </location>
    <ligand>
        <name>Zn(2+)</name>
        <dbReference type="ChEBI" id="CHEBI:29105"/>
        <label>2</label>
    </ligand>
</feature>
<feature type="binding site" evidence="1 2 5">
    <location>
        <position position="604"/>
    </location>
    <ligand>
        <name>Zn(2+)</name>
        <dbReference type="ChEBI" id="CHEBI:29105"/>
        <label>2</label>
    </ligand>
</feature>
<feature type="helix" evidence="6">
    <location>
        <begin position="4"/>
        <end position="17"/>
    </location>
</feature>
<feature type="strand" evidence="6">
    <location>
        <begin position="27"/>
        <end position="30"/>
    </location>
</feature>
<feature type="strand" evidence="6">
    <location>
        <begin position="33"/>
        <end position="39"/>
    </location>
</feature>
<feature type="helix" evidence="6">
    <location>
        <begin position="41"/>
        <end position="46"/>
    </location>
</feature>
<feature type="helix" evidence="6">
    <location>
        <begin position="49"/>
        <end position="58"/>
    </location>
</feature>
<feature type="strand" evidence="6">
    <location>
        <begin position="62"/>
        <end position="66"/>
    </location>
</feature>
<feature type="helix" evidence="6">
    <location>
        <begin position="68"/>
        <end position="70"/>
    </location>
</feature>
<feature type="helix" evidence="6">
    <location>
        <begin position="74"/>
        <end position="84"/>
    </location>
</feature>
<feature type="helix" evidence="6">
    <location>
        <begin position="87"/>
        <end position="89"/>
    </location>
</feature>
<feature type="strand" evidence="6">
    <location>
        <begin position="91"/>
        <end position="96"/>
    </location>
</feature>
<feature type="turn" evidence="6">
    <location>
        <begin position="98"/>
        <end position="100"/>
    </location>
</feature>
<feature type="strand" evidence="6">
    <location>
        <begin position="101"/>
        <end position="109"/>
    </location>
</feature>
<feature type="helix" evidence="6">
    <location>
        <begin position="110"/>
        <end position="114"/>
    </location>
</feature>
<feature type="strand" evidence="6">
    <location>
        <begin position="116"/>
        <end position="118"/>
    </location>
</feature>
<feature type="helix" evidence="6">
    <location>
        <begin position="119"/>
        <end position="128"/>
    </location>
</feature>
<feature type="strand" evidence="6">
    <location>
        <begin position="130"/>
        <end position="136"/>
    </location>
</feature>
<feature type="helix" evidence="6">
    <location>
        <begin position="143"/>
        <end position="154"/>
    </location>
</feature>
<feature type="helix" evidence="6">
    <location>
        <begin position="156"/>
        <end position="170"/>
    </location>
</feature>
<feature type="strand" evidence="6">
    <location>
        <begin position="182"/>
        <end position="187"/>
    </location>
</feature>
<feature type="strand" evidence="6">
    <location>
        <begin position="189"/>
        <end position="193"/>
    </location>
</feature>
<feature type="strand" evidence="6">
    <location>
        <begin position="196"/>
        <end position="200"/>
    </location>
</feature>
<feature type="strand" evidence="6">
    <location>
        <begin position="205"/>
        <end position="208"/>
    </location>
</feature>
<feature type="turn" evidence="6">
    <location>
        <begin position="227"/>
        <end position="229"/>
    </location>
</feature>
<feature type="helix" evidence="6">
    <location>
        <begin position="232"/>
        <end position="234"/>
    </location>
</feature>
<feature type="strand" evidence="6">
    <location>
        <begin position="237"/>
        <end position="239"/>
    </location>
</feature>
<feature type="helix" evidence="6">
    <location>
        <begin position="245"/>
        <end position="248"/>
    </location>
</feature>
<feature type="helix" evidence="6">
    <location>
        <begin position="251"/>
        <end position="256"/>
    </location>
</feature>
<feature type="strand" evidence="6">
    <location>
        <begin position="263"/>
        <end position="265"/>
    </location>
</feature>
<feature type="helix" evidence="6">
    <location>
        <begin position="267"/>
        <end position="287"/>
    </location>
</feature>
<feature type="helix" evidence="6">
    <location>
        <begin position="295"/>
        <end position="303"/>
    </location>
</feature>
<feature type="strand" evidence="6">
    <location>
        <begin position="305"/>
        <end position="307"/>
    </location>
</feature>
<feature type="strand" evidence="6">
    <location>
        <begin position="314"/>
        <end position="317"/>
    </location>
</feature>
<feature type="strand" evidence="6">
    <location>
        <begin position="320"/>
        <end position="326"/>
    </location>
</feature>
<feature type="strand" evidence="6">
    <location>
        <begin position="328"/>
        <end position="330"/>
    </location>
</feature>
<feature type="strand" evidence="6">
    <location>
        <begin position="334"/>
        <end position="340"/>
    </location>
</feature>
<feature type="turn" evidence="6">
    <location>
        <begin position="341"/>
        <end position="344"/>
    </location>
</feature>
<feature type="strand" evidence="6">
    <location>
        <begin position="345"/>
        <end position="349"/>
    </location>
</feature>
<feature type="strand" evidence="6">
    <location>
        <begin position="372"/>
        <end position="377"/>
    </location>
</feature>
<feature type="helix" evidence="6">
    <location>
        <begin position="390"/>
        <end position="400"/>
    </location>
</feature>
<feature type="helix" evidence="6">
    <location>
        <begin position="402"/>
        <end position="406"/>
    </location>
</feature>
<feature type="strand" evidence="6">
    <location>
        <begin position="411"/>
        <end position="414"/>
    </location>
</feature>
<feature type="turn" evidence="6">
    <location>
        <begin position="417"/>
        <end position="419"/>
    </location>
</feature>
<feature type="helix" evidence="6">
    <location>
        <begin position="420"/>
        <end position="434"/>
    </location>
</feature>
<feature type="strand" evidence="6">
    <location>
        <begin position="442"/>
        <end position="447"/>
    </location>
</feature>
<feature type="helix" evidence="6">
    <location>
        <begin position="448"/>
        <end position="457"/>
    </location>
</feature>
<feature type="helix" evidence="6">
    <location>
        <begin position="459"/>
        <end position="461"/>
    </location>
</feature>
<feature type="helix" evidence="6">
    <location>
        <begin position="464"/>
        <end position="469"/>
    </location>
</feature>
<feature type="strand" evidence="6">
    <location>
        <begin position="483"/>
        <end position="486"/>
    </location>
</feature>
<feature type="helix" evidence="6">
    <location>
        <begin position="490"/>
        <end position="494"/>
    </location>
</feature>
<feature type="strand" evidence="6">
    <location>
        <begin position="503"/>
        <end position="507"/>
    </location>
</feature>
<feature type="strand" evidence="6">
    <location>
        <begin position="511"/>
        <end position="514"/>
    </location>
</feature>
<feature type="helix" evidence="6">
    <location>
        <begin position="515"/>
        <end position="523"/>
    </location>
</feature>
<feature type="strand" evidence="6">
    <location>
        <begin position="530"/>
        <end position="533"/>
    </location>
</feature>
<feature type="helix" evidence="6">
    <location>
        <begin position="542"/>
        <end position="547"/>
    </location>
</feature>
<feature type="strand" evidence="6">
    <location>
        <begin position="569"/>
        <end position="573"/>
    </location>
</feature>
<feature type="helix" evidence="6">
    <location>
        <begin position="583"/>
        <end position="591"/>
    </location>
</feature>
<feature type="strand" evidence="6">
    <location>
        <begin position="598"/>
        <end position="605"/>
    </location>
</feature>
<feature type="helix" evidence="6">
    <location>
        <begin position="607"/>
        <end position="621"/>
    </location>
</feature>
<feature type="strand" evidence="6">
    <location>
        <begin position="624"/>
        <end position="627"/>
    </location>
</feature>
<feature type="strand" evidence="6">
    <location>
        <begin position="633"/>
        <end position="635"/>
    </location>
</feature>
<organism>
    <name type="scientific">Methanosarcina mazei (strain ATCC BAA-159 / DSM 3647 / Goe1 / Go1 / JCM 11833 / OCM 88)</name>
    <name type="common">Methanosarcina frisia</name>
    <dbReference type="NCBI Taxonomy" id="192952"/>
    <lineage>
        <taxon>Archaea</taxon>
        <taxon>Methanobacteriati</taxon>
        <taxon>Methanobacteriota</taxon>
        <taxon>Stenosarchaea group</taxon>
        <taxon>Methanomicrobia</taxon>
        <taxon>Methanosarcinales</taxon>
        <taxon>Methanosarcinaceae</taxon>
        <taxon>Methanosarcina</taxon>
    </lineage>
</organism>
<sequence length="637" mass="71750">MPIEDVLLDLKHKIEKNLPAGVTITDVEFEGPQLVLYTEEPRKFADDGNIIRNLAKELRTRIAMRPDPRVLATPEDSISIIEEVVPKESVISSYYFDPDSGEVIIEAEKPGLVIGKHGATLREITKQIGWIPKVVRTPPIKSRTVKNIREFMRNNLKERKEILKTVGRKIHRECTSKDQWVRVTALGGCKEVGRSCFLLSTPESRILIDCGVNVGSDENMTPYLYVPEVFPLNQIDAVIVTHAHLDHQGLVPLLFKYGYEGPVYCTPPTRDLMVLLQLDYIDVAAKEGKKIPYESGMVAKTLKHTIPLDYEEVTDIAPDIKLTFHNAGHILGSAISHFHIGDGLHNVVFTGDYKYEKTRLFDPAVNKFPRVETVISEATYGNANAFQPALKDAEKHLQMVVKNTIERGGIAVIPAFAVGRSQEVMIVLEESIRKGLIPEVPVYLDGMIWEATAIHATHPEYLNNDLRKLIFQKGQNPFLSECFKPVDSHEARQKIIQNPQPCVILATSGMMNGGPVMEYFKAFAEDPRNTLVFVGYQADGTIGRRIQKGWKEIPMTGKNGSTEMLKMNMEVQVVDGFSGHSDRRQLMEYVKRMQPRPERVFTEHGDEKACVDLASSVYKKLKIETRALTNLETVRLL</sequence>
<gene>
    <name evidence="1" type="primary">fttA</name>
    <name evidence="4" type="ordered locus">MM_0695</name>
</gene>
<dbReference type="EC" id="3.1.-.-" evidence="1"/>
<dbReference type="EMBL" id="AE008384">
    <property type="protein sequence ID" value="AAM30391.1"/>
    <property type="molecule type" value="Genomic_DNA"/>
</dbReference>
<dbReference type="RefSeq" id="WP_011032646.1">
    <property type="nucleotide sequence ID" value="NC_003901.1"/>
</dbReference>
<dbReference type="PDB" id="2XR1">
    <property type="method" value="X-ray"/>
    <property type="resolution" value="2.59 A"/>
    <property type="chains" value="A/B=1-637"/>
</dbReference>
<dbReference type="PDBsum" id="2XR1"/>
<dbReference type="SMR" id="Q8PZ03"/>
<dbReference type="KEGG" id="mma:MM_0695"/>
<dbReference type="PATRIC" id="fig|192952.21.peg.826"/>
<dbReference type="eggNOG" id="arCOG00543">
    <property type="taxonomic scope" value="Archaea"/>
</dbReference>
<dbReference type="HOGENOM" id="CLU_009673_5_1_2"/>
<dbReference type="EvolutionaryTrace" id="Q8PZ03"/>
<dbReference type="Proteomes" id="UP000000595">
    <property type="component" value="Chromosome"/>
</dbReference>
<dbReference type="GO" id="GO:0003677">
    <property type="term" value="F:DNA binding"/>
    <property type="evidence" value="ECO:0007669"/>
    <property type="project" value="UniProtKB-KW"/>
</dbReference>
<dbReference type="GO" id="GO:0004527">
    <property type="term" value="F:exonuclease activity"/>
    <property type="evidence" value="ECO:0007669"/>
    <property type="project" value="UniProtKB-KW"/>
</dbReference>
<dbReference type="GO" id="GO:0042802">
    <property type="term" value="F:identical protein binding"/>
    <property type="evidence" value="ECO:0000314"/>
    <property type="project" value="UniProtKB"/>
</dbReference>
<dbReference type="GO" id="GO:0003723">
    <property type="term" value="F:RNA binding"/>
    <property type="evidence" value="ECO:0007669"/>
    <property type="project" value="UniProtKB-KW"/>
</dbReference>
<dbReference type="GO" id="GO:0004521">
    <property type="term" value="F:RNA endonuclease activity"/>
    <property type="evidence" value="ECO:0007669"/>
    <property type="project" value="TreeGrafter"/>
</dbReference>
<dbReference type="GO" id="GO:0008270">
    <property type="term" value="F:zinc ion binding"/>
    <property type="evidence" value="ECO:0000314"/>
    <property type="project" value="UniProtKB"/>
</dbReference>
<dbReference type="GO" id="GO:0006353">
    <property type="term" value="P:DNA-templated transcription termination"/>
    <property type="evidence" value="ECO:0007669"/>
    <property type="project" value="UniProtKB-KW"/>
</dbReference>
<dbReference type="CDD" id="cd22532">
    <property type="entry name" value="KH-II_CPSF_arch_rpt1"/>
    <property type="match status" value="1"/>
</dbReference>
<dbReference type="CDD" id="cd02410">
    <property type="entry name" value="KH-II_CPSF_arch_rpt2"/>
    <property type="match status" value="1"/>
</dbReference>
<dbReference type="CDD" id="cd16295">
    <property type="entry name" value="TTHA0252-CPSF-like_MBL-fold"/>
    <property type="match status" value="1"/>
</dbReference>
<dbReference type="Gene3D" id="3.30.300.20">
    <property type="match status" value="1"/>
</dbReference>
<dbReference type="Gene3D" id="3.30.300.230">
    <property type="match status" value="1"/>
</dbReference>
<dbReference type="Gene3D" id="3.40.50.10890">
    <property type="match status" value="1"/>
</dbReference>
<dbReference type="Gene3D" id="3.60.15.10">
    <property type="entry name" value="Ribonuclease Z/Hydroxyacylglutathione hydrolase-like"/>
    <property type="match status" value="1"/>
</dbReference>
<dbReference type="HAMAP" id="MF_00870">
    <property type="entry name" value="FttA"/>
    <property type="match status" value="1"/>
</dbReference>
<dbReference type="InterPro" id="IPR019975">
    <property type="entry name" value="aCPSF1"/>
</dbReference>
<dbReference type="InterPro" id="IPR022712">
    <property type="entry name" value="Beta_Casp"/>
</dbReference>
<dbReference type="InterPro" id="IPR004087">
    <property type="entry name" value="KH_dom"/>
</dbReference>
<dbReference type="InterPro" id="IPR015946">
    <property type="entry name" value="KH_dom-like_a/b"/>
</dbReference>
<dbReference type="InterPro" id="IPR004044">
    <property type="entry name" value="KH_dom_type_2"/>
</dbReference>
<dbReference type="InterPro" id="IPR009019">
    <property type="entry name" value="KH_sf_prok-type"/>
</dbReference>
<dbReference type="InterPro" id="IPR050698">
    <property type="entry name" value="MBL"/>
</dbReference>
<dbReference type="InterPro" id="IPR001279">
    <property type="entry name" value="Metallo-B-lactamas"/>
</dbReference>
<dbReference type="InterPro" id="IPR036866">
    <property type="entry name" value="RibonucZ/Hydroxyglut_hydro"/>
</dbReference>
<dbReference type="InterPro" id="IPR011108">
    <property type="entry name" value="RMMBL"/>
</dbReference>
<dbReference type="InterPro" id="IPR033769">
    <property type="entry name" value="TffA_KH"/>
</dbReference>
<dbReference type="NCBIfam" id="TIGR03675">
    <property type="entry name" value="arCOG00543"/>
    <property type="match status" value="1"/>
</dbReference>
<dbReference type="PANTHER" id="PTHR11203:SF51">
    <property type="entry name" value="CLEAVAGE AND POLYADENYLATION SPECIFICITY FACTOR"/>
    <property type="match status" value="1"/>
</dbReference>
<dbReference type="PANTHER" id="PTHR11203">
    <property type="entry name" value="CLEAVAGE AND POLYADENYLATION SPECIFICITY FACTOR FAMILY MEMBER"/>
    <property type="match status" value="1"/>
</dbReference>
<dbReference type="Pfam" id="PF10996">
    <property type="entry name" value="Beta-Casp"/>
    <property type="match status" value="1"/>
</dbReference>
<dbReference type="Pfam" id="PF07650">
    <property type="entry name" value="KH_2"/>
    <property type="match status" value="1"/>
</dbReference>
<dbReference type="Pfam" id="PF17214">
    <property type="entry name" value="KH_TffA"/>
    <property type="match status" value="1"/>
</dbReference>
<dbReference type="Pfam" id="PF00753">
    <property type="entry name" value="Lactamase_B"/>
    <property type="match status" value="1"/>
</dbReference>
<dbReference type="Pfam" id="PF07521">
    <property type="entry name" value="RMMBL"/>
    <property type="match status" value="1"/>
</dbReference>
<dbReference type="SMART" id="SM01027">
    <property type="entry name" value="Beta-Casp"/>
    <property type="match status" value="1"/>
</dbReference>
<dbReference type="SMART" id="SM00322">
    <property type="entry name" value="KH"/>
    <property type="match status" value="1"/>
</dbReference>
<dbReference type="SMART" id="SM00849">
    <property type="entry name" value="Lactamase_B"/>
    <property type="match status" value="1"/>
</dbReference>
<dbReference type="SUPFAM" id="SSF56281">
    <property type="entry name" value="Metallo-hydrolase/oxidoreductase"/>
    <property type="match status" value="1"/>
</dbReference>
<dbReference type="SUPFAM" id="SSF54814">
    <property type="entry name" value="Prokaryotic type KH domain (KH-domain type II)"/>
    <property type="match status" value="1"/>
</dbReference>
<dbReference type="PROSITE" id="PS50084">
    <property type="entry name" value="KH_TYPE_1"/>
    <property type="match status" value="1"/>
</dbReference>
<comment type="function">
    <text evidence="1">Terminates transcription on the whole genome. Termination is linked to FttA-mediated RNA cleavage and does not require NTP hydrolysis. Cleaves endonucleolytically at the RNA exit channel of RNA polymerase (RNAP); the 5'-3' exonuclease activity of this protein degrades the nascent RNA released from RNAP.</text>
</comment>
<comment type="cofactor">
    <cofactor evidence="1 2">
        <name>Zn(2+)</name>
        <dbReference type="ChEBI" id="CHEBI:29105"/>
    </cofactor>
    <text evidence="1 2">Binds 2 Zn(2+) ions, which are required for nuclease activity.</text>
</comment>
<comment type="subunit">
    <text evidence="1 2">Homodimer (PubMed:20851187). Interacts with RNA polymerase (RNAP), interacts with the Spt4-Spt5 complex.</text>
</comment>
<comment type="similarity">
    <text evidence="1">Belongs to the metallo-beta-lactamase superfamily. RNA-metabolizing metallo-beta-lactamase-like family. FttA subfamily.</text>
</comment>
<reference evidence="4" key="1">
    <citation type="journal article" date="2002" name="J. Mol. Microbiol. Biotechnol.">
        <title>The genome of Methanosarcina mazei: evidence for lateral gene transfer between Bacteria and Archaea.</title>
        <authorList>
            <person name="Deppenmeier U."/>
            <person name="Johann A."/>
            <person name="Hartsch T."/>
            <person name="Merkl R."/>
            <person name="Schmitz R.A."/>
            <person name="Martinez-Arias R."/>
            <person name="Henne A."/>
            <person name="Wiezer A."/>
            <person name="Baeumer S."/>
            <person name="Jacobi C."/>
            <person name="Brueggemann H."/>
            <person name="Lienard T."/>
            <person name="Christmann A."/>
            <person name="Boemecke M."/>
            <person name="Steckel S."/>
            <person name="Bhattacharyya A."/>
            <person name="Lykidis A."/>
            <person name="Overbeek R."/>
            <person name="Klenk H.-P."/>
            <person name="Gunsalus R.P."/>
            <person name="Fritz H.-J."/>
            <person name="Gottschalk G."/>
        </authorList>
    </citation>
    <scope>NUCLEOTIDE SEQUENCE [LARGE SCALE GENOMIC DNA]</scope>
    <source>
        <strain>ATCC BAA-159 / DSM 3647 / Goe1 / Go1 / JCM 11833 / OCM 88</strain>
    </source>
</reference>
<reference evidence="5" key="2">
    <citation type="journal article" date="2011" name="J. Struct. Biol.">
        <title>Crystal structure of a dimeric archaeal cleavage and polyadenylation specificity factor.</title>
        <authorList>
            <person name="Mir-Montazeri B."/>
            <person name="Ammelburg M."/>
            <person name="Forouzan D."/>
            <person name="Lupas A.N."/>
            <person name="Hartmann M.D."/>
        </authorList>
    </citation>
    <scope>X-RAY CRYSTALLOGRAPHY (2.59 ANGSTROMS) IN COMPLEX WITH ZINC</scope>
    <scope>COFACTOR</scope>
    <scope>SUBUNIT</scope>
    <source>
        <strain>ATCC BAA-159 / DSM 3647 / Goe1 / Go1 / JCM 11833 / OCM 88</strain>
    </source>
</reference>
<evidence type="ECO:0000255" key="1">
    <source>
        <dbReference type="HAMAP-Rule" id="MF_00870"/>
    </source>
</evidence>
<evidence type="ECO:0000269" key="2">
    <source>
    </source>
</evidence>
<evidence type="ECO:0000303" key="3">
    <source>
    </source>
</evidence>
<evidence type="ECO:0000312" key="4">
    <source>
        <dbReference type="EMBL" id="AAM30391.1"/>
    </source>
</evidence>
<evidence type="ECO:0007744" key="5">
    <source>
        <dbReference type="PDB" id="2XR1"/>
    </source>
</evidence>
<evidence type="ECO:0007829" key="6">
    <source>
        <dbReference type="PDB" id="2XR1"/>
    </source>
</evidence>
<keyword id="KW-0002">3D-structure</keyword>
<keyword id="KW-0238">DNA-binding</keyword>
<keyword id="KW-0255">Endonuclease</keyword>
<keyword id="KW-0269">Exonuclease</keyword>
<keyword id="KW-0378">Hydrolase</keyword>
<keyword id="KW-0479">Metal-binding</keyword>
<keyword id="KW-0540">Nuclease</keyword>
<keyword id="KW-0694">RNA-binding</keyword>
<keyword id="KW-0804">Transcription</keyword>
<keyword id="KW-0805">Transcription regulation</keyword>
<keyword id="KW-0806">Transcription termination</keyword>
<keyword id="KW-0862">Zinc</keyword>
<name>FTTA_METMA</name>
<accession>Q8PZ03</accession>